<proteinExistence type="inferred from homology"/>
<protein>
    <recommendedName>
        <fullName evidence="1">Co-chaperonin GroES</fullName>
    </recommendedName>
    <alternativeName>
        <fullName evidence="1">10 kDa chaperonin</fullName>
    </alternativeName>
    <alternativeName>
        <fullName evidence="1">Chaperonin-10</fullName>
        <shortName evidence="1">Cpn10</shortName>
    </alternativeName>
</protein>
<accession>B7UZG4</accession>
<name>CH10_PSEA8</name>
<reference key="1">
    <citation type="journal article" date="2009" name="Genome Res.">
        <title>Newly introduced genomic prophage islands are critical determinants of in vivo competitiveness in the Liverpool epidemic strain of Pseudomonas aeruginosa.</title>
        <authorList>
            <person name="Winstanley C."/>
            <person name="Langille M.G.I."/>
            <person name="Fothergill J.L."/>
            <person name="Kukavica-Ibrulj I."/>
            <person name="Paradis-Bleau C."/>
            <person name="Sanschagrin F."/>
            <person name="Thomson N.R."/>
            <person name="Winsor G.L."/>
            <person name="Quail M.A."/>
            <person name="Lennard N."/>
            <person name="Bignell A."/>
            <person name="Clarke L."/>
            <person name="Seeger K."/>
            <person name="Saunders D."/>
            <person name="Harris D."/>
            <person name="Parkhill J."/>
            <person name="Hancock R.E.W."/>
            <person name="Brinkman F.S.L."/>
            <person name="Levesque R.C."/>
        </authorList>
    </citation>
    <scope>NUCLEOTIDE SEQUENCE [LARGE SCALE GENOMIC DNA]</scope>
    <source>
        <strain>LESB58</strain>
    </source>
</reference>
<sequence length="97" mass="10267">MKLRPLHDRVVIRRSEEETKTAGGIVLPGSAAEKPNRGEVVAVGTGRVLDNGEVRALAVKVGDKVVFGPYSGSNAIKVDGEELLVMGESEILAVLED</sequence>
<organism>
    <name type="scientific">Pseudomonas aeruginosa (strain LESB58)</name>
    <dbReference type="NCBI Taxonomy" id="557722"/>
    <lineage>
        <taxon>Bacteria</taxon>
        <taxon>Pseudomonadati</taxon>
        <taxon>Pseudomonadota</taxon>
        <taxon>Gammaproteobacteria</taxon>
        <taxon>Pseudomonadales</taxon>
        <taxon>Pseudomonadaceae</taxon>
        <taxon>Pseudomonas</taxon>
    </lineage>
</organism>
<feature type="chain" id="PRO_1000129694" description="Co-chaperonin GroES">
    <location>
        <begin position="1"/>
        <end position="97"/>
    </location>
</feature>
<dbReference type="EMBL" id="FM209186">
    <property type="protein sequence ID" value="CAW29519.1"/>
    <property type="molecule type" value="Genomic_DNA"/>
</dbReference>
<dbReference type="RefSeq" id="WP_003094064.1">
    <property type="nucleotide sequence ID" value="NC_011770.1"/>
</dbReference>
<dbReference type="SMR" id="B7UZG4"/>
<dbReference type="KEGG" id="pag:PLES_47651"/>
<dbReference type="HOGENOM" id="CLU_132825_2_0_6"/>
<dbReference type="GO" id="GO:0005737">
    <property type="term" value="C:cytoplasm"/>
    <property type="evidence" value="ECO:0007669"/>
    <property type="project" value="UniProtKB-SubCell"/>
</dbReference>
<dbReference type="GO" id="GO:0005524">
    <property type="term" value="F:ATP binding"/>
    <property type="evidence" value="ECO:0007669"/>
    <property type="project" value="InterPro"/>
</dbReference>
<dbReference type="GO" id="GO:0046872">
    <property type="term" value="F:metal ion binding"/>
    <property type="evidence" value="ECO:0007669"/>
    <property type="project" value="TreeGrafter"/>
</dbReference>
<dbReference type="GO" id="GO:0044183">
    <property type="term" value="F:protein folding chaperone"/>
    <property type="evidence" value="ECO:0007669"/>
    <property type="project" value="InterPro"/>
</dbReference>
<dbReference type="GO" id="GO:0051087">
    <property type="term" value="F:protein-folding chaperone binding"/>
    <property type="evidence" value="ECO:0007669"/>
    <property type="project" value="TreeGrafter"/>
</dbReference>
<dbReference type="GO" id="GO:0051082">
    <property type="term" value="F:unfolded protein binding"/>
    <property type="evidence" value="ECO:0007669"/>
    <property type="project" value="TreeGrafter"/>
</dbReference>
<dbReference type="GO" id="GO:0051085">
    <property type="term" value="P:chaperone cofactor-dependent protein refolding"/>
    <property type="evidence" value="ECO:0007669"/>
    <property type="project" value="TreeGrafter"/>
</dbReference>
<dbReference type="CDD" id="cd00320">
    <property type="entry name" value="cpn10"/>
    <property type="match status" value="1"/>
</dbReference>
<dbReference type="FunFam" id="2.30.33.40:FF:000001">
    <property type="entry name" value="10 kDa chaperonin"/>
    <property type="match status" value="1"/>
</dbReference>
<dbReference type="Gene3D" id="2.30.33.40">
    <property type="entry name" value="GroES chaperonin"/>
    <property type="match status" value="1"/>
</dbReference>
<dbReference type="HAMAP" id="MF_00580">
    <property type="entry name" value="CH10"/>
    <property type="match status" value="1"/>
</dbReference>
<dbReference type="InterPro" id="IPR020818">
    <property type="entry name" value="Chaperonin_GroES"/>
</dbReference>
<dbReference type="InterPro" id="IPR037124">
    <property type="entry name" value="Chaperonin_GroES_sf"/>
</dbReference>
<dbReference type="InterPro" id="IPR018369">
    <property type="entry name" value="Chaprnonin_Cpn10_CS"/>
</dbReference>
<dbReference type="InterPro" id="IPR011032">
    <property type="entry name" value="GroES-like_sf"/>
</dbReference>
<dbReference type="NCBIfam" id="NF001526">
    <property type="entry name" value="PRK00364.1-1"/>
    <property type="match status" value="1"/>
</dbReference>
<dbReference type="NCBIfam" id="NF001527">
    <property type="entry name" value="PRK00364.1-2"/>
    <property type="match status" value="1"/>
</dbReference>
<dbReference type="NCBIfam" id="NF001531">
    <property type="entry name" value="PRK00364.2-2"/>
    <property type="match status" value="1"/>
</dbReference>
<dbReference type="NCBIfam" id="NF001533">
    <property type="entry name" value="PRK00364.2-4"/>
    <property type="match status" value="1"/>
</dbReference>
<dbReference type="PANTHER" id="PTHR10772">
    <property type="entry name" value="10 KDA HEAT SHOCK PROTEIN"/>
    <property type="match status" value="1"/>
</dbReference>
<dbReference type="PANTHER" id="PTHR10772:SF58">
    <property type="entry name" value="CO-CHAPERONIN GROES"/>
    <property type="match status" value="1"/>
</dbReference>
<dbReference type="Pfam" id="PF00166">
    <property type="entry name" value="Cpn10"/>
    <property type="match status" value="1"/>
</dbReference>
<dbReference type="PRINTS" id="PR00297">
    <property type="entry name" value="CHAPERONIN10"/>
</dbReference>
<dbReference type="SMART" id="SM00883">
    <property type="entry name" value="Cpn10"/>
    <property type="match status" value="1"/>
</dbReference>
<dbReference type="SUPFAM" id="SSF50129">
    <property type="entry name" value="GroES-like"/>
    <property type="match status" value="1"/>
</dbReference>
<dbReference type="PROSITE" id="PS00681">
    <property type="entry name" value="CHAPERONINS_CPN10"/>
    <property type="match status" value="1"/>
</dbReference>
<keyword id="KW-0143">Chaperone</keyword>
<keyword id="KW-0963">Cytoplasm</keyword>
<comment type="function">
    <text evidence="1">Together with the chaperonin GroEL, plays an essential role in assisting protein folding. The GroEL-GroES system forms a nano-cage that allows encapsulation of the non-native substrate proteins and provides a physical environment optimized to promote and accelerate protein folding. GroES binds to the apical surface of the GroEL ring, thereby capping the opening of the GroEL channel.</text>
</comment>
<comment type="subunit">
    <text evidence="1">Heptamer of 7 subunits arranged in a ring. Interacts with the chaperonin GroEL.</text>
</comment>
<comment type="subcellular location">
    <subcellularLocation>
        <location evidence="1">Cytoplasm</location>
    </subcellularLocation>
</comment>
<comment type="similarity">
    <text evidence="1">Belongs to the GroES chaperonin family.</text>
</comment>
<gene>
    <name evidence="1" type="primary">groES</name>
    <name evidence="1" type="synonym">groS</name>
    <name type="ordered locus">PLES_47651</name>
</gene>
<evidence type="ECO:0000255" key="1">
    <source>
        <dbReference type="HAMAP-Rule" id="MF_00580"/>
    </source>
</evidence>